<keyword id="KW-0227">DNA damage</keyword>
<keyword id="KW-0233">DNA recombination</keyword>
<keyword id="KW-0234">DNA repair</keyword>
<sequence length="233" mass="25499">MSFAAAQATYVLHSRPYKETSALVDFFTPLGRLRAVLRGARGKAGALARPFVPLEAEWRGRGELKTVARLESAGVPNLLNGQALFSGLYLNELLIRLLPAEDPQPEIFAHYAATLPLLAAGRPIEPLLRAFEWRLLEQLGYGFALDVDIDGRPIEPQALYQLLPEAGLEPVAQLQPGLFQGSELLSMADADWSAPGALAAAKRLMRQALAPHLGGRPLVSRELFMNRKESPRD</sequence>
<proteinExistence type="inferred from homology"/>
<gene>
    <name evidence="1" type="primary">recO</name>
    <name type="ordered locus">PLES_45711</name>
</gene>
<feature type="chain" id="PRO_1000118722" description="DNA repair protein RecO">
    <location>
        <begin position="1"/>
        <end position="233"/>
    </location>
</feature>
<organism>
    <name type="scientific">Pseudomonas aeruginosa (strain LESB58)</name>
    <dbReference type="NCBI Taxonomy" id="557722"/>
    <lineage>
        <taxon>Bacteria</taxon>
        <taxon>Pseudomonadati</taxon>
        <taxon>Pseudomonadota</taxon>
        <taxon>Gammaproteobacteria</taxon>
        <taxon>Pseudomonadales</taxon>
        <taxon>Pseudomonadaceae</taxon>
        <taxon>Pseudomonas</taxon>
    </lineage>
</organism>
<dbReference type="EMBL" id="FM209186">
    <property type="protein sequence ID" value="CAW29325.1"/>
    <property type="molecule type" value="Genomic_DNA"/>
</dbReference>
<dbReference type="RefSeq" id="WP_003101972.1">
    <property type="nucleotide sequence ID" value="NC_011770.1"/>
</dbReference>
<dbReference type="SMR" id="B7UYX0"/>
<dbReference type="KEGG" id="pag:PLES_45711"/>
<dbReference type="HOGENOM" id="CLU_066645_1_0_6"/>
<dbReference type="GO" id="GO:0043590">
    <property type="term" value="C:bacterial nucleoid"/>
    <property type="evidence" value="ECO:0007669"/>
    <property type="project" value="TreeGrafter"/>
</dbReference>
<dbReference type="GO" id="GO:0006310">
    <property type="term" value="P:DNA recombination"/>
    <property type="evidence" value="ECO:0007669"/>
    <property type="project" value="UniProtKB-UniRule"/>
</dbReference>
<dbReference type="GO" id="GO:0006302">
    <property type="term" value="P:double-strand break repair"/>
    <property type="evidence" value="ECO:0007669"/>
    <property type="project" value="TreeGrafter"/>
</dbReference>
<dbReference type="Gene3D" id="2.40.50.140">
    <property type="entry name" value="Nucleic acid-binding proteins"/>
    <property type="match status" value="1"/>
</dbReference>
<dbReference type="Gene3D" id="1.20.1440.120">
    <property type="entry name" value="Recombination protein O, C-terminal domain"/>
    <property type="match status" value="1"/>
</dbReference>
<dbReference type="HAMAP" id="MF_00201">
    <property type="entry name" value="RecO"/>
    <property type="match status" value="1"/>
</dbReference>
<dbReference type="InterPro" id="IPR037278">
    <property type="entry name" value="ARFGAP/RecO"/>
</dbReference>
<dbReference type="InterPro" id="IPR022572">
    <property type="entry name" value="DNA_rep/recomb_RecO_N"/>
</dbReference>
<dbReference type="InterPro" id="IPR012340">
    <property type="entry name" value="NA-bd_OB-fold"/>
</dbReference>
<dbReference type="InterPro" id="IPR003717">
    <property type="entry name" value="RecO"/>
</dbReference>
<dbReference type="InterPro" id="IPR042242">
    <property type="entry name" value="RecO_C"/>
</dbReference>
<dbReference type="NCBIfam" id="TIGR00613">
    <property type="entry name" value="reco"/>
    <property type="match status" value="1"/>
</dbReference>
<dbReference type="PANTHER" id="PTHR33991">
    <property type="entry name" value="DNA REPAIR PROTEIN RECO"/>
    <property type="match status" value="1"/>
</dbReference>
<dbReference type="PANTHER" id="PTHR33991:SF1">
    <property type="entry name" value="DNA REPAIR PROTEIN RECO"/>
    <property type="match status" value="1"/>
</dbReference>
<dbReference type="Pfam" id="PF02565">
    <property type="entry name" value="RecO_C"/>
    <property type="match status" value="1"/>
</dbReference>
<dbReference type="Pfam" id="PF11967">
    <property type="entry name" value="RecO_N"/>
    <property type="match status" value="1"/>
</dbReference>
<dbReference type="SUPFAM" id="SSF57863">
    <property type="entry name" value="ArfGap/RecO-like zinc finger"/>
    <property type="match status" value="1"/>
</dbReference>
<dbReference type="SUPFAM" id="SSF50249">
    <property type="entry name" value="Nucleic acid-binding proteins"/>
    <property type="match status" value="1"/>
</dbReference>
<protein>
    <recommendedName>
        <fullName evidence="1">DNA repair protein RecO</fullName>
    </recommendedName>
    <alternativeName>
        <fullName evidence="1">Recombination protein O</fullName>
    </alternativeName>
</protein>
<comment type="function">
    <text evidence="1">Involved in DNA repair and RecF pathway recombination.</text>
</comment>
<comment type="similarity">
    <text evidence="1">Belongs to the RecO family.</text>
</comment>
<reference key="1">
    <citation type="journal article" date="2009" name="Genome Res.">
        <title>Newly introduced genomic prophage islands are critical determinants of in vivo competitiveness in the Liverpool epidemic strain of Pseudomonas aeruginosa.</title>
        <authorList>
            <person name="Winstanley C."/>
            <person name="Langille M.G.I."/>
            <person name="Fothergill J.L."/>
            <person name="Kukavica-Ibrulj I."/>
            <person name="Paradis-Bleau C."/>
            <person name="Sanschagrin F."/>
            <person name="Thomson N.R."/>
            <person name="Winsor G.L."/>
            <person name="Quail M.A."/>
            <person name="Lennard N."/>
            <person name="Bignell A."/>
            <person name="Clarke L."/>
            <person name="Seeger K."/>
            <person name="Saunders D."/>
            <person name="Harris D."/>
            <person name="Parkhill J."/>
            <person name="Hancock R.E.W."/>
            <person name="Brinkman F.S.L."/>
            <person name="Levesque R.C."/>
        </authorList>
    </citation>
    <scope>NUCLEOTIDE SEQUENCE [LARGE SCALE GENOMIC DNA]</scope>
    <source>
        <strain>LESB58</strain>
    </source>
</reference>
<name>RECO_PSEA8</name>
<evidence type="ECO:0000255" key="1">
    <source>
        <dbReference type="HAMAP-Rule" id="MF_00201"/>
    </source>
</evidence>
<accession>B7UYX0</accession>